<proteinExistence type="inferred from homology"/>
<feature type="chain" id="PRO_1000213104" description="Protein-export protein SecB">
    <location>
        <begin position="1"/>
        <end position="155"/>
    </location>
</feature>
<gene>
    <name evidence="1" type="primary">secB</name>
    <name type="ordered locus">BWG_3300</name>
</gene>
<keyword id="KW-0143">Chaperone</keyword>
<keyword id="KW-0963">Cytoplasm</keyword>
<keyword id="KW-0653">Protein transport</keyword>
<keyword id="KW-0811">Translocation</keyword>
<keyword id="KW-0813">Transport</keyword>
<comment type="function">
    <text evidence="1">One of the proteins required for the normal export of preproteins out of the cell cytoplasm. It is a molecular chaperone that binds to a subset of precursor proteins, maintaining them in a translocation-competent state. It also specifically binds to its receptor SecA.</text>
</comment>
<comment type="subunit">
    <text evidence="1">Homotetramer, a dimer of dimers. One homotetramer interacts with 1 SecA dimer.</text>
</comment>
<comment type="subcellular location">
    <subcellularLocation>
        <location evidence="1">Cytoplasm</location>
    </subcellularLocation>
</comment>
<comment type="similarity">
    <text evidence="1">Belongs to the SecB family.</text>
</comment>
<dbReference type="EMBL" id="CP001396">
    <property type="protein sequence ID" value="ACR65301.1"/>
    <property type="molecule type" value="Genomic_DNA"/>
</dbReference>
<dbReference type="RefSeq" id="WP_000003377.1">
    <property type="nucleotide sequence ID" value="NC_012759.1"/>
</dbReference>
<dbReference type="SMR" id="C4ZXK1"/>
<dbReference type="GeneID" id="86944403"/>
<dbReference type="KEGG" id="ebw:BWG_3300"/>
<dbReference type="HOGENOM" id="CLU_111574_1_0_6"/>
<dbReference type="GO" id="GO:0005737">
    <property type="term" value="C:cytoplasm"/>
    <property type="evidence" value="ECO:0007669"/>
    <property type="project" value="UniProtKB-SubCell"/>
</dbReference>
<dbReference type="GO" id="GO:0051082">
    <property type="term" value="F:unfolded protein binding"/>
    <property type="evidence" value="ECO:0007669"/>
    <property type="project" value="InterPro"/>
</dbReference>
<dbReference type="GO" id="GO:0006457">
    <property type="term" value="P:protein folding"/>
    <property type="evidence" value="ECO:0007669"/>
    <property type="project" value="UniProtKB-UniRule"/>
</dbReference>
<dbReference type="GO" id="GO:0051262">
    <property type="term" value="P:protein tetramerization"/>
    <property type="evidence" value="ECO:0007669"/>
    <property type="project" value="InterPro"/>
</dbReference>
<dbReference type="GO" id="GO:0015031">
    <property type="term" value="P:protein transport"/>
    <property type="evidence" value="ECO:0007669"/>
    <property type="project" value="UniProtKB-UniRule"/>
</dbReference>
<dbReference type="CDD" id="cd00557">
    <property type="entry name" value="Translocase_SecB"/>
    <property type="match status" value="1"/>
</dbReference>
<dbReference type="FunFam" id="3.10.420.10:FF:000001">
    <property type="entry name" value="Protein-export chaperone SecB"/>
    <property type="match status" value="1"/>
</dbReference>
<dbReference type="Gene3D" id="3.10.420.10">
    <property type="entry name" value="SecB-like"/>
    <property type="match status" value="1"/>
</dbReference>
<dbReference type="HAMAP" id="MF_00821">
    <property type="entry name" value="SecB"/>
    <property type="match status" value="1"/>
</dbReference>
<dbReference type="InterPro" id="IPR003708">
    <property type="entry name" value="SecB"/>
</dbReference>
<dbReference type="InterPro" id="IPR035958">
    <property type="entry name" value="SecB-like_sf"/>
</dbReference>
<dbReference type="NCBIfam" id="NF004390">
    <property type="entry name" value="PRK05751.1-1"/>
    <property type="match status" value="1"/>
</dbReference>
<dbReference type="NCBIfam" id="NF004393">
    <property type="entry name" value="PRK05751.1-4"/>
    <property type="match status" value="1"/>
</dbReference>
<dbReference type="NCBIfam" id="TIGR00809">
    <property type="entry name" value="secB"/>
    <property type="match status" value="1"/>
</dbReference>
<dbReference type="PANTHER" id="PTHR36918">
    <property type="match status" value="1"/>
</dbReference>
<dbReference type="PANTHER" id="PTHR36918:SF1">
    <property type="entry name" value="PROTEIN-EXPORT PROTEIN SECB"/>
    <property type="match status" value="1"/>
</dbReference>
<dbReference type="Pfam" id="PF02556">
    <property type="entry name" value="SecB"/>
    <property type="match status" value="1"/>
</dbReference>
<dbReference type="PRINTS" id="PR01594">
    <property type="entry name" value="SECBCHAPRONE"/>
</dbReference>
<dbReference type="SUPFAM" id="SSF54611">
    <property type="entry name" value="SecB-like"/>
    <property type="match status" value="1"/>
</dbReference>
<organism>
    <name type="scientific">Escherichia coli (strain K12 / MC4100 / BW2952)</name>
    <dbReference type="NCBI Taxonomy" id="595496"/>
    <lineage>
        <taxon>Bacteria</taxon>
        <taxon>Pseudomonadati</taxon>
        <taxon>Pseudomonadota</taxon>
        <taxon>Gammaproteobacteria</taxon>
        <taxon>Enterobacterales</taxon>
        <taxon>Enterobacteriaceae</taxon>
        <taxon>Escherichia</taxon>
    </lineage>
</organism>
<sequence length="155" mass="17277">MSEQNNTEMTFQIQRIYTKDISFEAPNAPHVFQKDWQPEVKLDLDTASSQLADDVYEVVLRVTVTASLGEETAFLCEVQQGGIFSIAGIEGTQMAHCLGAYCPNILFPYARECITSMVSRGTFPQLNLAPVNFDALFMNYLQQQAGEGTEEHQDA</sequence>
<reference key="1">
    <citation type="journal article" date="2009" name="J. Bacteriol.">
        <title>Genomic sequencing reveals regulatory mutations and recombinational events in the widely used MC4100 lineage of Escherichia coli K-12.</title>
        <authorList>
            <person name="Ferenci T."/>
            <person name="Zhou Z."/>
            <person name="Betteridge T."/>
            <person name="Ren Y."/>
            <person name="Liu Y."/>
            <person name="Feng L."/>
            <person name="Reeves P.R."/>
            <person name="Wang L."/>
        </authorList>
    </citation>
    <scope>NUCLEOTIDE SEQUENCE [LARGE SCALE GENOMIC DNA]</scope>
    <source>
        <strain>K12 / MC4100 / BW2952</strain>
    </source>
</reference>
<protein>
    <recommendedName>
        <fullName evidence="1">Protein-export protein SecB</fullName>
    </recommendedName>
</protein>
<evidence type="ECO:0000255" key="1">
    <source>
        <dbReference type="HAMAP-Rule" id="MF_00821"/>
    </source>
</evidence>
<name>SECB_ECOBW</name>
<accession>C4ZXK1</accession>